<dbReference type="EMBL" id="CP000633">
    <property type="protein sequence ID" value="ACM35457.1"/>
    <property type="molecule type" value="Genomic_DNA"/>
</dbReference>
<dbReference type="RefSeq" id="WP_015914884.1">
    <property type="nucleotide sequence ID" value="NC_011989.1"/>
</dbReference>
<dbReference type="STRING" id="311402.Avi_0642"/>
<dbReference type="KEGG" id="avi:Avi_0642"/>
<dbReference type="eggNOG" id="COG5328">
    <property type="taxonomic scope" value="Bacteria"/>
</dbReference>
<dbReference type="HOGENOM" id="CLU_112904_0_0_5"/>
<dbReference type="Proteomes" id="UP000001596">
    <property type="component" value="Chromosome 1"/>
</dbReference>
<dbReference type="HAMAP" id="MF_00678">
    <property type="entry name" value="UPF0262"/>
    <property type="match status" value="1"/>
</dbReference>
<dbReference type="InterPro" id="IPR008321">
    <property type="entry name" value="UCP032146"/>
</dbReference>
<dbReference type="NCBIfam" id="NF002769">
    <property type="entry name" value="PRK02853.1"/>
    <property type="match status" value="1"/>
</dbReference>
<dbReference type="Pfam" id="PF06793">
    <property type="entry name" value="UPF0262"/>
    <property type="match status" value="1"/>
</dbReference>
<dbReference type="PIRSF" id="PIRSF032146">
    <property type="entry name" value="UCP032146"/>
    <property type="match status" value="1"/>
</dbReference>
<reference key="1">
    <citation type="journal article" date="2009" name="J. Bacteriol.">
        <title>Genome sequences of three Agrobacterium biovars help elucidate the evolution of multichromosome genomes in bacteria.</title>
        <authorList>
            <person name="Slater S.C."/>
            <person name="Goldman B.S."/>
            <person name="Goodner B."/>
            <person name="Setubal J.C."/>
            <person name="Farrand S.K."/>
            <person name="Nester E.W."/>
            <person name="Burr T.J."/>
            <person name="Banta L."/>
            <person name="Dickerman A.W."/>
            <person name="Paulsen I."/>
            <person name="Otten L."/>
            <person name="Suen G."/>
            <person name="Welch R."/>
            <person name="Almeida N.F."/>
            <person name="Arnold F."/>
            <person name="Burton O.T."/>
            <person name="Du Z."/>
            <person name="Ewing A."/>
            <person name="Godsy E."/>
            <person name="Heisel S."/>
            <person name="Houmiel K.L."/>
            <person name="Jhaveri J."/>
            <person name="Lu J."/>
            <person name="Miller N.M."/>
            <person name="Norton S."/>
            <person name="Chen Q."/>
            <person name="Phoolcharoen W."/>
            <person name="Ohlin V."/>
            <person name="Ondrusek D."/>
            <person name="Pride N."/>
            <person name="Stricklin S.L."/>
            <person name="Sun J."/>
            <person name="Wheeler C."/>
            <person name="Wilson L."/>
            <person name="Zhu H."/>
            <person name="Wood D.W."/>
        </authorList>
    </citation>
    <scope>NUCLEOTIDE SEQUENCE [LARGE SCALE GENOMIC DNA]</scope>
    <source>
        <strain>ATCC BAA-846 / DSM 112012 / S4</strain>
    </source>
</reference>
<accession>B9JR44</accession>
<comment type="similarity">
    <text evidence="1">Belongs to the UPF0262 family.</text>
</comment>
<name>Y642_ALLAM</name>
<protein>
    <recommendedName>
        <fullName evidence="1">UPF0262 protein Avi_0642</fullName>
    </recommendedName>
</protein>
<proteinExistence type="inferred from homology"/>
<sequence>MAKGDFKLFDVVLDETIGRSTPDVEHERAVAIFDLIEENSFEPVGHPGGPYRLSLSLVNARLVFTITTQDGEAVATHILSLTPLRRIIKDYFMICESYYEAIRSSTPSQIEAIDMGRRGIHNDGSQTLKDRLKDKINLDFDSARRLFTLVCVLYWRG</sequence>
<gene>
    <name type="ordered locus">Avi_0642</name>
</gene>
<keyword id="KW-1185">Reference proteome</keyword>
<feature type="chain" id="PRO_1000147707" description="UPF0262 protein Avi_0642">
    <location>
        <begin position="1"/>
        <end position="157"/>
    </location>
</feature>
<organism>
    <name type="scientific">Allorhizobium ampelinum (strain ATCC BAA-846 / DSM 112012 / S4)</name>
    <name type="common">Agrobacterium vitis (strain S4)</name>
    <dbReference type="NCBI Taxonomy" id="311402"/>
    <lineage>
        <taxon>Bacteria</taxon>
        <taxon>Pseudomonadati</taxon>
        <taxon>Pseudomonadota</taxon>
        <taxon>Alphaproteobacteria</taxon>
        <taxon>Hyphomicrobiales</taxon>
        <taxon>Rhizobiaceae</taxon>
        <taxon>Rhizobium/Agrobacterium group</taxon>
        <taxon>Allorhizobium</taxon>
        <taxon>Allorhizobium ampelinum</taxon>
    </lineage>
</organism>
<evidence type="ECO:0000255" key="1">
    <source>
        <dbReference type="HAMAP-Rule" id="MF_00678"/>
    </source>
</evidence>